<name>PURL_THET8</name>
<evidence type="ECO:0000255" key="1">
    <source>
        <dbReference type="HAMAP-Rule" id="MF_00420"/>
    </source>
</evidence>
<evidence type="ECO:0000269" key="2">
    <source>
    </source>
</evidence>
<evidence type="ECO:0000305" key="3"/>
<evidence type="ECO:0007829" key="4">
    <source>
        <dbReference type="PDB" id="3VIU"/>
    </source>
</evidence>
<feature type="chain" id="PRO_0000100503" description="Phosphoribosylformylglycinamidine synthase subunit PurL">
    <location>
        <begin position="1"/>
        <end position="725"/>
    </location>
</feature>
<feature type="active site" evidence="1">
    <location>
        <position position="41"/>
    </location>
</feature>
<feature type="active site" description="Proton acceptor" evidence="1">
    <location>
        <position position="87"/>
    </location>
</feature>
<feature type="binding site">
    <location>
        <begin position="66"/>
        <end position="67"/>
    </location>
    <ligand>
        <name>ATP</name>
        <dbReference type="ChEBI" id="CHEBI:30616"/>
    </ligand>
</feature>
<feature type="binding site">
    <location>
        <begin position="83"/>
        <end position="85"/>
    </location>
    <ligand>
        <name>ATP</name>
        <dbReference type="ChEBI" id="CHEBI:30616"/>
    </ligand>
</feature>
<feature type="binding site" evidence="3">
    <location>
        <begin position="86"/>
        <end position="89"/>
    </location>
    <ligand>
        <name>substrate</name>
    </ligand>
</feature>
<feature type="binding site" evidence="1">
    <location>
        <position position="108"/>
    </location>
    <ligand>
        <name>substrate</name>
    </ligand>
</feature>
<feature type="binding site">
    <location>
        <position position="109"/>
    </location>
    <ligand>
        <name>ATP</name>
        <dbReference type="ChEBI" id="CHEBI:30616"/>
    </ligand>
</feature>
<feature type="binding site" evidence="1">
    <location>
        <position position="211"/>
    </location>
    <ligand>
        <name>substrate</name>
    </ligand>
</feature>
<feature type="binding site" evidence="1">
    <location>
        <position position="231"/>
    </location>
    <ligand>
        <name>substrate</name>
    </ligand>
</feature>
<feature type="binding site" evidence="1">
    <location>
        <begin position="303"/>
        <end position="305"/>
    </location>
    <ligand>
        <name>substrate</name>
    </ligand>
</feature>
<feature type="binding site" evidence="2">
    <location>
        <position position="430"/>
    </location>
    <ligand>
        <name>Mg(2+)</name>
        <dbReference type="ChEBI" id="CHEBI:18420"/>
    </ligand>
</feature>
<feature type="binding site" evidence="2">
    <location>
        <position position="472"/>
    </location>
    <ligand>
        <name>Mg(2+)</name>
        <dbReference type="ChEBI" id="CHEBI:18420"/>
    </ligand>
</feature>
<feature type="binding site">
    <location>
        <position position="485"/>
    </location>
    <ligand>
        <name>ATP</name>
        <dbReference type="ChEBI" id="CHEBI:30616"/>
    </ligand>
</feature>
<feature type="binding site">
    <location>
        <begin position="522"/>
        <end position="523"/>
    </location>
    <ligand>
        <name>ATP</name>
        <dbReference type="ChEBI" id="CHEBI:30616"/>
    </ligand>
</feature>
<feature type="binding site" evidence="3">
    <location>
        <position position="525"/>
    </location>
    <ligand>
        <name>substrate</name>
    </ligand>
</feature>
<feature type="binding site" evidence="2">
    <location>
        <position position="620"/>
    </location>
    <ligand>
        <name>Mg(2+)</name>
        <dbReference type="ChEBI" id="CHEBI:18420"/>
    </ligand>
</feature>
<feature type="helix" evidence="4">
    <location>
        <begin position="2"/>
        <end position="7"/>
    </location>
</feature>
<feature type="helix" evidence="4">
    <location>
        <begin position="12"/>
        <end position="22"/>
    </location>
</feature>
<feature type="helix" evidence="4">
    <location>
        <begin position="28"/>
        <end position="37"/>
    </location>
</feature>
<feature type="helix" evidence="4">
    <location>
        <begin position="40"/>
        <end position="43"/>
    </location>
</feature>
<feature type="turn" evidence="4">
    <location>
        <begin position="45"/>
        <end position="47"/>
    </location>
</feature>
<feature type="helix" evidence="4">
    <location>
        <begin position="48"/>
        <end position="51"/>
    </location>
</feature>
<feature type="strand" evidence="4">
    <location>
        <begin position="61"/>
        <end position="63"/>
    </location>
</feature>
<feature type="strand" evidence="4">
    <location>
        <begin position="67"/>
        <end position="75"/>
    </location>
</feature>
<feature type="strand" evidence="4">
    <location>
        <begin position="78"/>
        <end position="86"/>
    </location>
</feature>
<feature type="helix" evidence="4">
    <location>
        <begin position="88"/>
        <end position="93"/>
    </location>
</feature>
<feature type="helix" evidence="4">
    <location>
        <begin position="95"/>
        <end position="112"/>
    </location>
</feature>
<feature type="strand" evidence="4">
    <location>
        <begin position="116"/>
        <end position="127"/>
    </location>
</feature>
<feature type="helix" evidence="4">
    <location>
        <begin position="132"/>
        <end position="152"/>
    </location>
</feature>
<feature type="strand" evidence="4">
    <location>
        <begin position="156"/>
        <end position="163"/>
    </location>
</feature>
<feature type="helix" evidence="4">
    <location>
        <begin position="165"/>
        <end position="167"/>
    </location>
</feature>
<feature type="strand" evidence="4">
    <location>
        <begin position="168"/>
        <end position="170"/>
    </location>
</feature>
<feature type="strand" evidence="4">
    <location>
        <begin position="172"/>
        <end position="182"/>
    </location>
</feature>
<feature type="helix" evidence="4">
    <location>
        <begin position="183"/>
        <end position="185"/>
    </location>
</feature>
<feature type="strand" evidence="4">
    <location>
        <begin position="196"/>
        <end position="202"/>
    </location>
</feature>
<feature type="helix" evidence="4">
    <location>
        <begin position="235"/>
        <end position="250"/>
    </location>
</feature>
<feature type="strand" evidence="4">
    <location>
        <begin position="254"/>
        <end position="259"/>
    </location>
</feature>
<feature type="helix" evidence="4">
    <location>
        <begin position="264"/>
        <end position="275"/>
    </location>
</feature>
<feature type="strand" evidence="4">
    <location>
        <begin position="278"/>
        <end position="283"/>
    </location>
</feature>
<feature type="helix" evidence="4">
    <location>
        <begin position="284"/>
        <end position="286"/>
    </location>
</feature>
<feature type="strand" evidence="4">
    <location>
        <begin position="289"/>
        <end position="293"/>
    </location>
</feature>
<feature type="helix" evidence="4">
    <location>
        <begin position="296"/>
        <end position="301"/>
    </location>
</feature>
<feature type="strand" evidence="4">
    <location>
        <begin position="305"/>
        <end position="312"/>
    </location>
</feature>
<feature type="helix" evidence="4">
    <location>
        <begin position="317"/>
        <end position="326"/>
    </location>
</feature>
<feature type="strand" evidence="4">
    <location>
        <begin position="331"/>
        <end position="347"/>
    </location>
</feature>
<feature type="strand" evidence="4">
    <location>
        <begin position="350"/>
        <end position="356"/>
    </location>
</feature>
<feature type="helix" evidence="4">
    <location>
        <begin position="357"/>
        <end position="361"/>
    </location>
</feature>
<feature type="helix" evidence="4">
    <location>
        <begin position="374"/>
        <end position="380"/>
    </location>
</feature>
<feature type="helix" evidence="4">
    <location>
        <begin position="391"/>
        <end position="399"/>
    </location>
</feature>
<feature type="turn" evidence="4">
    <location>
        <begin position="402"/>
        <end position="404"/>
    </location>
</feature>
<feature type="helix" evidence="4">
    <location>
        <begin position="408"/>
        <end position="411"/>
    </location>
</feature>
<feature type="strand" evidence="4">
    <location>
        <begin position="420"/>
        <end position="424"/>
    </location>
</feature>
<feature type="strand" evidence="4">
    <location>
        <begin position="430"/>
        <end position="436"/>
    </location>
</feature>
<feature type="strand" evidence="4">
    <location>
        <begin position="439"/>
        <end position="448"/>
    </location>
</feature>
<feature type="helix" evidence="4">
    <location>
        <begin position="451"/>
        <end position="456"/>
    </location>
</feature>
<feature type="helix" evidence="4">
    <location>
        <begin position="458"/>
        <end position="475"/>
    </location>
</feature>
<feature type="strand" evidence="4">
    <location>
        <begin position="479"/>
        <end position="488"/>
    </location>
</feature>
<feature type="strand" evidence="4">
    <location>
        <begin position="492"/>
        <end position="494"/>
    </location>
</feature>
<feature type="helix" evidence="4">
    <location>
        <begin position="495"/>
        <end position="515"/>
    </location>
</feature>
<feature type="strand" evidence="4">
    <location>
        <begin position="519"/>
        <end position="525"/>
    </location>
</feature>
<feature type="strand" evidence="4">
    <location>
        <begin position="538"/>
        <end position="548"/>
    </location>
</feature>
<feature type="strand" evidence="4">
    <location>
        <begin position="554"/>
        <end position="556"/>
    </location>
</feature>
<feature type="strand" evidence="4">
    <location>
        <begin position="563"/>
        <end position="568"/>
    </location>
</feature>
<feature type="helix" evidence="4">
    <location>
        <begin position="578"/>
        <end position="584"/>
    </location>
</feature>
<feature type="helix" evidence="4">
    <location>
        <begin position="596"/>
        <end position="611"/>
    </location>
</feature>
<feature type="strand" evidence="4">
    <location>
        <begin position="616"/>
        <end position="620"/>
    </location>
</feature>
<feature type="helix" evidence="4">
    <location>
        <begin position="625"/>
        <end position="634"/>
    </location>
</feature>
<feature type="turn" evidence="4">
    <location>
        <begin position="635"/>
        <end position="637"/>
    </location>
</feature>
<feature type="strand" evidence="4">
    <location>
        <begin position="641"/>
        <end position="644"/>
    </location>
</feature>
<feature type="helix" evidence="4">
    <location>
        <begin position="650"/>
        <end position="653"/>
    </location>
</feature>
<feature type="strand" evidence="4">
    <location>
        <begin position="661"/>
        <end position="665"/>
    </location>
</feature>
<feature type="helix" evidence="4">
    <location>
        <begin position="667"/>
        <end position="669"/>
    </location>
</feature>
<feature type="helix" evidence="4">
    <location>
        <begin position="670"/>
        <end position="679"/>
    </location>
</feature>
<feature type="strand" evidence="4">
    <location>
        <begin position="684"/>
        <end position="690"/>
    </location>
</feature>
<feature type="strand" evidence="4">
    <location>
        <begin position="692"/>
        <end position="699"/>
    </location>
</feature>
<feature type="strand" evidence="4">
    <location>
        <begin position="702"/>
        <end position="707"/>
    </location>
</feature>
<feature type="helix" evidence="4">
    <location>
        <begin position="708"/>
        <end position="723"/>
    </location>
</feature>
<sequence length="725" mass="78643">MEALAKEIGIPEGEYREIVQRLGREPNRVELLLFKVMWSEHCAYKNSRPLLKALPKEGEAVLQGPGENAGVVRVGEGWAVAFKIESHNHPSAVEPFQGAATGVGGILRDIMSMGARPIALLDSLRFGPPEEARSRYLLKGVVSGIAFYGNAIGVPTVGGDLYFHEGYRENPLVNAMCLGLLREEHLKRSRASLGRPIYYAGAKTGRDGIGGAAFASRELKEEKAEDRPAVQVGDPFLGKLLMEATLEAIELDLVEGVQDMGAAGLTSSLSELAHKSGLGVELHLDLVPTREEGMTPEELLLSESQERMVLVPKEGKEKALEEVFGRWGLDCVPVARTIPERVFRVLFRGEVVAEVPTEALAEAPTYVRVGREDPEVRRLRETPIPPLEADPQEVLRRLLASPNLASREAVYERYDHQVGTRTALLPGKGDAAVLWIKGTRLGVAAKVDQNPRYSRLHPRLGAMHALAEACRNVSVVGAKPLAYTDGLNLGSPETPEGYHELAETIAGLKEASEALGVPVVSGNVSLYNESGGKRIPPTAMVGVVGVLEVDKRAEMGFRRPGEVLLLIGEERGELGASEVLYLLTGKEFGHPPRLDLGREKAVQEAIRDLIQRGLTRTAHDVAEGGLLLALAEMTFPYGVGATVEVREEGLEALFGEAPSRVLFTVEKTRLQEATLLLEERGLPYRVLGETGGKSLTVLTPGGVLEWSLEELLSAWKAPLREVLDG</sequence>
<gene>
    <name evidence="1" type="primary">purL</name>
    <name type="ordered locus">TTHA1519</name>
</gene>
<dbReference type="EC" id="6.3.5.3" evidence="1"/>
<dbReference type="EMBL" id="AP008226">
    <property type="protein sequence ID" value="BAD71342.1"/>
    <property type="molecule type" value="Genomic_DNA"/>
</dbReference>
<dbReference type="RefSeq" id="WP_011173566.1">
    <property type="nucleotide sequence ID" value="NC_006461.1"/>
</dbReference>
<dbReference type="RefSeq" id="YP_144785.1">
    <property type="nucleotide sequence ID" value="NC_006461.1"/>
</dbReference>
<dbReference type="PDB" id="3VIU">
    <property type="method" value="X-ray"/>
    <property type="resolution" value="2.35 A"/>
    <property type="chains" value="A=1-725"/>
</dbReference>
<dbReference type="PDBsum" id="3VIU"/>
<dbReference type="SMR" id="Q5SMH8"/>
<dbReference type="EnsemblBacteria" id="BAD71342">
    <property type="protein sequence ID" value="BAD71342"/>
    <property type="gene ID" value="BAD71342"/>
</dbReference>
<dbReference type="GeneID" id="3168862"/>
<dbReference type="KEGG" id="ttj:TTHA1519"/>
<dbReference type="PATRIC" id="fig|300852.9.peg.1494"/>
<dbReference type="eggNOG" id="COG0046">
    <property type="taxonomic scope" value="Bacteria"/>
</dbReference>
<dbReference type="HOGENOM" id="CLU_003100_0_1_0"/>
<dbReference type="PhylomeDB" id="Q5SMH8"/>
<dbReference type="UniPathway" id="UPA00074">
    <property type="reaction ID" value="UER00128"/>
</dbReference>
<dbReference type="EvolutionaryTrace" id="Q5SMH8"/>
<dbReference type="Proteomes" id="UP000000532">
    <property type="component" value="Chromosome"/>
</dbReference>
<dbReference type="GO" id="GO:0005737">
    <property type="term" value="C:cytoplasm"/>
    <property type="evidence" value="ECO:0007669"/>
    <property type="project" value="UniProtKB-SubCell"/>
</dbReference>
<dbReference type="GO" id="GO:0005524">
    <property type="term" value="F:ATP binding"/>
    <property type="evidence" value="ECO:0007669"/>
    <property type="project" value="UniProtKB-UniRule"/>
</dbReference>
<dbReference type="GO" id="GO:0000287">
    <property type="term" value="F:magnesium ion binding"/>
    <property type="evidence" value="ECO:0007669"/>
    <property type="project" value="UniProtKB-UniRule"/>
</dbReference>
<dbReference type="GO" id="GO:0004642">
    <property type="term" value="F:phosphoribosylformylglycinamidine synthase activity"/>
    <property type="evidence" value="ECO:0007669"/>
    <property type="project" value="UniProtKB-UniRule"/>
</dbReference>
<dbReference type="GO" id="GO:0006189">
    <property type="term" value="P:'de novo' IMP biosynthetic process"/>
    <property type="evidence" value="ECO:0007669"/>
    <property type="project" value="UniProtKB-UniRule"/>
</dbReference>
<dbReference type="CDD" id="cd02203">
    <property type="entry name" value="PurL_repeat1"/>
    <property type="match status" value="1"/>
</dbReference>
<dbReference type="CDD" id="cd02204">
    <property type="entry name" value="PurL_repeat2"/>
    <property type="match status" value="1"/>
</dbReference>
<dbReference type="FunFam" id="3.30.1330.10:FF:000004">
    <property type="entry name" value="Phosphoribosylformylglycinamidine synthase subunit PurL"/>
    <property type="match status" value="1"/>
</dbReference>
<dbReference type="Gene3D" id="3.90.650.10">
    <property type="entry name" value="PurM-like C-terminal domain"/>
    <property type="match status" value="2"/>
</dbReference>
<dbReference type="Gene3D" id="3.30.1330.10">
    <property type="entry name" value="PurM-like, N-terminal domain"/>
    <property type="match status" value="2"/>
</dbReference>
<dbReference type="HAMAP" id="MF_00420">
    <property type="entry name" value="PurL_2"/>
    <property type="match status" value="1"/>
</dbReference>
<dbReference type="InterPro" id="IPR010074">
    <property type="entry name" value="PRibForGlyAmidine_synth_PurL"/>
</dbReference>
<dbReference type="InterPro" id="IPR041609">
    <property type="entry name" value="PurL_linker"/>
</dbReference>
<dbReference type="InterPro" id="IPR010918">
    <property type="entry name" value="PurM-like_C_dom"/>
</dbReference>
<dbReference type="InterPro" id="IPR036676">
    <property type="entry name" value="PurM-like_C_sf"/>
</dbReference>
<dbReference type="InterPro" id="IPR016188">
    <property type="entry name" value="PurM-like_N"/>
</dbReference>
<dbReference type="InterPro" id="IPR036921">
    <property type="entry name" value="PurM-like_N_sf"/>
</dbReference>
<dbReference type="NCBIfam" id="TIGR01736">
    <property type="entry name" value="FGAM_synth_II"/>
    <property type="match status" value="1"/>
</dbReference>
<dbReference type="NCBIfam" id="NF002290">
    <property type="entry name" value="PRK01213.1"/>
    <property type="match status" value="1"/>
</dbReference>
<dbReference type="PANTHER" id="PTHR43555">
    <property type="entry name" value="PHOSPHORIBOSYLFORMYLGLYCINAMIDINE SYNTHASE SUBUNIT PURL"/>
    <property type="match status" value="1"/>
</dbReference>
<dbReference type="PANTHER" id="PTHR43555:SF1">
    <property type="entry name" value="PHOSPHORIBOSYLFORMYLGLYCINAMIDINE SYNTHASE SUBUNIT PURL"/>
    <property type="match status" value="1"/>
</dbReference>
<dbReference type="Pfam" id="PF00586">
    <property type="entry name" value="AIRS"/>
    <property type="match status" value="2"/>
</dbReference>
<dbReference type="Pfam" id="PF02769">
    <property type="entry name" value="AIRS_C"/>
    <property type="match status" value="2"/>
</dbReference>
<dbReference type="Pfam" id="PF18072">
    <property type="entry name" value="FGAR-AT_linker"/>
    <property type="match status" value="1"/>
</dbReference>
<dbReference type="PIRSF" id="PIRSF001587">
    <property type="entry name" value="FGAM_synthase_II"/>
    <property type="match status" value="1"/>
</dbReference>
<dbReference type="SUPFAM" id="SSF56042">
    <property type="entry name" value="PurM C-terminal domain-like"/>
    <property type="match status" value="2"/>
</dbReference>
<dbReference type="SUPFAM" id="SSF55326">
    <property type="entry name" value="PurM N-terminal domain-like"/>
    <property type="match status" value="2"/>
</dbReference>
<proteinExistence type="evidence at protein level"/>
<protein>
    <recommendedName>
        <fullName evidence="1">Phosphoribosylformylglycinamidine synthase subunit PurL</fullName>
        <shortName evidence="1">FGAM synthase</shortName>
        <ecNumber evidence="1">6.3.5.3</ecNumber>
    </recommendedName>
    <alternativeName>
        <fullName evidence="1">Formylglycinamide ribonucleotide amidotransferase subunit II</fullName>
        <shortName evidence="1">FGAR amidotransferase II</shortName>
        <shortName evidence="1">FGAR-AT II</shortName>
    </alternativeName>
    <alternativeName>
        <fullName evidence="1">Glutamine amidotransferase PurL</fullName>
    </alternativeName>
    <alternativeName>
        <fullName evidence="1">Phosphoribosylformylglycinamidine synthase subunit II</fullName>
    </alternativeName>
</protein>
<reference key="1">
    <citation type="submission" date="2004-11" db="EMBL/GenBank/DDBJ databases">
        <title>Complete genome sequence of Thermus thermophilus HB8.</title>
        <authorList>
            <person name="Masui R."/>
            <person name="Kurokawa K."/>
            <person name="Nakagawa N."/>
            <person name="Tokunaga F."/>
            <person name="Koyama Y."/>
            <person name="Shibata T."/>
            <person name="Oshima T."/>
            <person name="Yokoyama S."/>
            <person name="Yasunaga T."/>
            <person name="Kuramitsu S."/>
        </authorList>
    </citation>
    <scope>NUCLEOTIDE SEQUENCE [LARGE SCALE GENOMIC DNA]</scope>
    <source>
        <strain>ATCC 27634 / DSM 579 / HB8</strain>
    </source>
</reference>
<reference key="2">
    <citation type="journal article" date="2012" name="Acta Crystallogr. F">
        <title>Structure of N-formylglycinamide ribonucleotide amidotransferase II (PurL) from Thermus thermophilus HB8.</title>
        <authorList>
            <person name="Suzuki S."/>
            <person name="Yanai H."/>
            <person name="Kanagawa M."/>
            <person name="Tamura S."/>
            <person name="Watanabe Y."/>
            <person name="Fuse K."/>
            <person name="Baba S."/>
            <person name="Sampei G."/>
            <person name="Kawai G."/>
        </authorList>
    </citation>
    <scope>X-RAY CRYSTALLOGRAPHY (2.35 ANGSTROMS) IN COMPLEX WITH ADP; MAGNESIUM AND PHOSPHATE</scope>
    <source>
        <strain>ATCC 27634 / DSM 579 / HB8</strain>
    </source>
</reference>
<organism>
    <name type="scientific">Thermus thermophilus (strain ATCC 27634 / DSM 579 / HB8)</name>
    <dbReference type="NCBI Taxonomy" id="300852"/>
    <lineage>
        <taxon>Bacteria</taxon>
        <taxon>Thermotogati</taxon>
        <taxon>Deinococcota</taxon>
        <taxon>Deinococci</taxon>
        <taxon>Thermales</taxon>
        <taxon>Thermaceae</taxon>
        <taxon>Thermus</taxon>
    </lineage>
</organism>
<accession>Q5SMH8</accession>
<comment type="function">
    <text evidence="1">Part of the phosphoribosylformylglycinamidine synthase complex involved in the purines biosynthetic pathway. Catalyzes the ATP-dependent conversion of formylglycinamide ribonucleotide (FGAR) and glutamine to yield formylglycinamidine ribonucleotide (FGAM) and glutamate. The FGAM synthase complex is composed of three subunits. PurQ produces an ammonia molecule by converting glutamine to glutamate. PurL transfers the ammonia molecule to FGAR to form FGAM in an ATP-dependent manner. PurS interacts with PurQ and PurL and is thought to assist in the transfer of the ammonia molecule from PurQ to PurL.</text>
</comment>
<comment type="catalytic activity">
    <reaction evidence="1">
        <text>N(2)-formyl-N(1)-(5-phospho-beta-D-ribosyl)glycinamide + L-glutamine + ATP + H2O = 2-formamido-N(1)-(5-O-phospho-beta-D-ribosyl)acetamidine + L-glutamate + ADP + phosphate + H(+)</text>
        <dbReference type="Rhea" id="RHEA:17129"/>
        <dbReference type="ChEBI" id="CHEBI:15377"/>
        <dbReference type="ChEBI" id="CHEBI:15378"/>
        <dbReference type="ChEBI" id="CHEBI:29985"/>
        <dbReference type="ChEBI" id="CHEBI:30616"/>
        <dbReference type="ChEBI" id="CHEBI:43474"/>
        <dbReference type="ChEBI" id="CHEBI:58359"/>
        <dbReference type="ChEBI" id="CHEBI:147286"/>
        <dbReference type="ChEBI" id="CHEBI:147287"/>
        <dbReference type="ChEBI" id="CHEBI:456216"/>
        <dbReference type="EC" id="6.3.5.3"/>
    </reaction>
</comment>
<comment type="pathway">
    <text evidence="1">Purine metabolism; IMP biosynthesis via de novo pathway; 5-amino-1-(5-phospho-D-ribosyl)imidazole from N(2)-formyl-N(1)-(5-phospho-D-ribosyl)glycinamide: step 1/2.</text>
</comment>
<comment type="subunit">
    <text evidence="1">Monomer. Part of the FGAM synthase complex composed of 1 PurL, 1 PurQ and 2 PurS subunits.</text>
</comment>
<comment type="subcellular location">
    <subcellularLocation>
        <location evidence="1">Cytoplasm</location>
    </subcellularLocation>
</comment>
<comment type="similarity">
    <text evidence="1">Belongs to the FGAMS family.</text>
</comment>
<keyword id="KW-0002">3D-structure</keyword>
<keyword id="KW-0067">ATP-binding</keyword>
<keyword id="KW-0963">Cytoplasm</keyword>
<keyword id="KW-0436">Ligase</keyword>
<keyword id="KW-0460">Magnesium</keyword>
<keyword id="KW-0479">Metal-binding</keyword>
<keyword id="KW-0547">Nucleotide-binding</keyword>
<keyword id="KW-0658">Purine biosynthesis</keyword>
<keyword id="KW-1185">Reference proteome</keyword>